<sequence length="454" mass="50929">MEVNRLAYLTAMGSLRPPSPNGDWSKPQDAPHKSVIDMMASGVSHIKVLKVDIDAQHLCVCLPHNMLTCCHPAVDMENLLGSGSFGKVYASGPGICAKVFTSAEAFYHETVMMDLVALARSYNCDDFKSVCLQFYLSACVTCKTIWYPRFSQSLHTFKDFTVDHLHDLDREFKGLTDAVFFLNQKCGLFHGDICPSNILVETFKGPGSGIKSLILTDLGTAAIHAGNTFKSLSINNPQDDSVIYNAQIYLSPFLVCKDYVKPLCVLRRCYLLRHHAQDVDVEEITDTVVGQNMALKIDCSTLLQVLLLVLARVMEQPNSLTYESWLREIEDDSSDAYFLLLLGPKLVLLTHLSQLWEINFDVGVNTQGVLSRGQLPHPHTRLLKECCQLFREEFDAVVKEEVLIKLGQGVLKNIIFELLQFDYFEIHGRQPQHGLFAQSHAARADSEHGNWRTS</sequence>
<protein>
    <recommendedName>
        <fullName>Putative tyrosine kinase 36</fullName>
        <ecNumber>2.7.10.2</ecNumber>
    </recommendedName>
</protein>
<organism>
    <name type="scientific">Alcelaphine herpesvirus 1 (strain C500)</name>
    <name type="common">AlHV-1</name>
    <name type="synonym">Malignant catarrhal fever virus</name>
    <dbReference type="NCBI Taxonomy" id="654901"/>
    <lineage>
        <taxon>Viruses</taxon>
        <taxon>Duplodnaviria</taxon>
        <taxon>Heunggongvirae</taxon>
        <taxon>Peploviricota</taxon>
        <taxon>Herviviricetes</taxon>
        <taxon>Herpesvirales</taxon>
        <taxon>Orthoherpesviridae</taxon>
        <taxon>Gammaherpesvirinae</taxon>
        <taxon>Macavirus</taxon>
        <taxon>Macavirus alcelaphinegamma1</taxon>
    </lineage>
</organism>
<feature type="chain" id="PRO_0000405713" description="Putative tyrosine kinase 36">
    <location>
        <begin position="1"/>
        <end position="454"/>
    </location>
</feature>
<feature type="active site" description="Proton acceptor" evidence="2">
    <location>
        <position position="192"/>
    </location>
</feature>
<feature type="binding site" evidence="1">
    <location>
        <begin position="80"/>
        <end position="88"/>
    </location>
    <ligand>
        <name>ATP</name>
        <dbReference type="ChEBI" id="CHEBI:30616"/>
    </ligand>
</feature>
<feature type="binding site" evidence="1">
    <location>
        <position position="98"/>
    </location>
    <ligand>
        <name>ATP</name>
        <dbReference type="ChEBI" id="CHEBI:30616"/>
    </ligand>
</feature>
<reference key="1">
    <citation type="journal article" date="1997" name="J. Virol.">
        <title>Primary structure of the alcelaphine herpesvirus 1 genome.</title>
        <authorList>
            <person name="Ensser A."/>
            <person name="Pflanz R."/>
            <person name="Fleckenstein B."/>
        </authorList>
    </citation>
    <scope>NUCLEOTIDE SEQUENCE [LARGE SCALE GENOMIC DNA]</scope>
</reference>
<accession>O36385</accession>
<comment type="catalytic activity">
    <reaction evidence="2">
        <text>L-tyrosyl-[protein] + ATP = O-phospho-L-tyrosyl-[protein] + ADP + H(+)</text>
        <dbReference type="Rhea" id="RHEA:10596"/>
        <dbReference type="Rhea" id="RHEA-COMP:10136"/>
        <dbReference type="Rhea" id="RHEA-COMP:20101"/>
        <dbReference type="ChEBI" id="CHEBI:15378"/>
        <dbReference type="ChEBI" id="CHEBI:30616"/>
        <dbReference type="ChEBI" id="CHEBI:46858"/>
        <dbReference type="ChEBI" id="CHEBI:61978"/>
        <dbReference type="ChEBI" id="CHEBI:456216"/>
        <dbReference type="EC" id="2.7.10.2"/>
    </reaction>
</comment>
<comment type="similarity">
    <text evidence="3">Belongs to the protein kinase superfamily. Tyr protein kinase family.</text>
</comment>
<name>VG36_ALHV1</name>
<evidence type="ECO:0000250" key="1"/>
<evidence type="ECO:0000255" key="2">
    <source>
        <dbReference type="PROSITE-ProRule" id="PRU10028"/>
    </source>
</evidence>
<evidence type="ECO:0000305" key="3"/>
<dbReference type="EC" id="2.7.10.2"/>
<dbReference type="EMBL" id="AF005370">
    <property type="protein sequence ID" value="AAC58082.1"/>
    <property type="molecule type" value="Genomic_DNA"/>
</dbReference>
<dbReference type="PIR" id="T03130">
    <property type="entry name" value="T03130"/>
</dbReference>
<dbReference type="RefSeq" id="NP_065534.1">
    <property type="nucleotide sequence ID" value="NC_002531.1"/>
</dbReference>
<dbReference type="KEGG" id="vg:911800"/>
<dbReference type="Proteomes" id="UP000000941">
    <property type="component" value="Segment"/>
</dbReference>
<dbReference type="GO" id="GO:0005524">
    <property type="term" value="F:ATP binding"/>
    <property type="evidence" value="ECO:0007669"/>
    <property type="project" value="UniProtKB-KW"/>
</dbReference>
<dbReference type="GO" id="GO:0004715">
    <property type="term" value="F:non-membrane spanning protein tyrosine kinase activity"/>
    <property type="evidence" value="ECO:0007669"/>
    <property type="project" value="UniProtKB-EC"/>
</dbReference>
<dbReference type="Gene3D" id="1.10.510.10">
    <property type="entry name" value="Transferase(Phosphotransferase) domain 1"/>
    <property type="match status" value="1"/>
</dbReference>
<dbReference type="InterPro" id="IPR011009">
    <property type="entry name" value="Kinase-like_dom_sf"/>
</dbReference>
<dbReference type="InterPro" id="IPR008266">
    <property type="entry name" value="Tyr_kinase_AS"/>
</dbReference>
<dbReference type="SUPFAM" id="SSF56112">
    <property type="entry name" value="Protein kinase-like (PK-like)"/>
    <property type="match status" value="1"/>
</dbReference>
<dbReference type="PROSITE" id="PS00109">
    <property type="entry name" value="PROTEIN_KINASE_TYR"/>
    <property type="match status" value="1"/>
</dbReference>
<organismHost>
    <name type="scientific">Connochaetes taurinus</name>
    <name type="common">Blue wildebeest</name>
    <dbReference type="NCBI Taxonomy" id="9927"/>
</organismHost>
<gene>
    <name type="primary">36</name>
</gene>
<keyword id="KW-0067">ATP-binding</keyword>
<keyword id="KW-0418">Kinase</keyword>
<keyword id="KW-0547">Nucleotide-binding</keyword>
<keyword id="KW-1185">Reference proteome</keyword>
<keyword id="KW-0808">Transferase</keyword>
<keyword id="KW-0829">Tyrosine-protein kinase</keyword>
<proteinExistence type="inferred from homology"/>